<evidence type="ECO:0000250" key="1">
    <source>
        <dbReference type="UniProtKB" id="P38712"/>
    </source>
</evidence>
<evidence type="ECO:0000255" key="2">
    <source>
        <dbReference type="PROSITE-ProRule" id="PRU00541"/>
    </source>
</evidence>
<evidence type="ECO:0000255" key="3">
    <source>
        <dbReference type="PROSITE-ProRule" id="PRU00542"/>
    </source>
</evidence>
<evidence type="ECO:0000256" key="4">
    <source>
        <dbReference type="SAM" id="MobiDB-lite"/>
    </source>
</evidence>
<evidence type="ECO:0000305" key="5"/>
<protein>
    <recommendedName>
        <fullName evidence="5">ATP-dependent rRNA helicase rrp3</fullName>
        <ecNumber evidence="1">3.6.4.13</ecNumber>
    </recommendedName>
</protein>
<keyword id="KW-0067">ATP-binding</keyword>
<keyword id="KW-0347">Helicase</keyword>
<keyword id="KW-0378">Hydrolase</keyword>
<keyword id="KW-0547">Nucleotide-binding</keyword>
<keyword id="KW-0539">Nucleus</keyword>
<keyword id="KW-1185">Reference proteome</keyword>
<keyword id="KW-0690">Ribosome biogenesis</keyword>
<keyword id="KW-0694">RNA-binding</keyword>
<keyword id="KW-0698">rRNA processing</keyword>
<sequence length="445" mass="49698">MSKNSSRDSSPEEVSPDTETPSTTTAPKTFRELGVIDSLCEACEELGYTAPTPIQERCIPIALEGRDLIGLAETGSGKTAAFVLPMLQALMDKPQQFHSLILAPTRELAQQIAHTVEALGARISVRCTLLIGGMDMISQAIALGKKPHVIVATPGRLLDHLENTKGFSLRTLKYLVLDEADRLLDLDFGPILDKLLRLLPKRKTYLFSATMSSKVESLQRASLSDPVRVSVSTKNQTASKLLQSYLFIPHKFKDFYLVYLLNERAGQMGIIFTRTVHETQRLSIMLRNLGFPAIPIHGQLSQSARLASLNKFRARSRNLLIATDVAARGLDIPAVDYVLNYDLPQDSKTYIHRVGRTARAGKSGIAFSFVTQYEVELWLRIEDALGKKVEEYKPEKDEVMIFAERVNDAQRVAALTMRDMQDKDNKGRGPRNRKRTRDDLDQDDG</sequence>
<feature type="chain" id="PRO_0000282696" description="ATP-dependent rRNA helicase rrp3">
    <location>
        <begin position="1"/>
        <end position="445"/>
    </location>
</feature>
<feature type="domain" description="Helicase ATP-binding" evidence="2">
    <location>
        <begin position="59"/>
        <end position="229"/>
    </location>
</feature>
<feature type="domain" description="Helicase C-terminal" evidence="3">
    <location>
        <begin position="240"/>
        <end position="400"/>
    </location>
</feature>
<feature type="region of interest" description="Disordered" evidence="4">
    <location>
        <begin position="1"/>
        <end position="28"/>
    </location>
</feature>
<feature type="region of interest" description="Disordered" evidence="4">
    <location>
        <begin position="415"/>
        <end position="445"/>
    </location>
</feature>
<feature type="short sequence motif" description="Q motif" evidence="5">
    <location>
        <begin position="28"/>
        <end position="56"/>
    </location>
</feature>
<feature type="short sequence motif" description="DEAD box" evidence="5">
    <location>
        <begin position="178"/>
        <end position="181"/>
    </location>
</feature>
<feature type="compositionally biased region" description="Basic and acidic residues" evidence="4">
    <location>
        <begin position="1"/>
        <end position="10"/>
    </location>
</feature>
<feature type="compositionally biased region" description="Low complexity" evidence="4">
    <location>
        <begin position="17"/>
        <end position="28"/>
    </location>
</feature>
<feature type="binding site" evidence="2">
    <location>
        <begin position="72"/>
        <end position="79"/>
    </location>
    <ligand>
        <name>ATP</name>
        <dbReference type="ChEBI" id="CHEBI:30616"/>
    </ligand>
</feature>
<dbReference type="EC" id="3.6.4.13" evidence="1"/>
<dbReference type="EMBL" id="CH476602">
    <property type="protein sequence ID" value="EAU32975.1"/>
    <property type="status" value="ALT_INIT"/>
    <property type="molecule type" value="Genomic_DNA"/>
</dbReference>
<dbReference type="RefSeq" id="XP_001215609.1">
    <property type="nucleotide sequence ID" value="XM_001215609.1"/>
</dbReference>
<dbReference type="SMR" id="Q0CIQ3"/>
<dbReference type="STRING" id="341663.Q0CIQ3"/>
<dbReference type="EnsemblFungi" id="EAU32975">
    <property type="protein sequence ID" value="EAU32975"/>
    <property type="gene ID" value="ATEG_06431"/>
</dbReference>
<dbReference type="GeneID" id="4322412"/>
<dbReference type="eggNOG" id="KOG0330">
    <property type="taxonomic scope" value="Eukaryota"/>
</dbReference>
<dbReference type="OrthoDB" id="10261904at2759"/>
<dbReference type="Proteomes" id="UP000007963">
    <property type="component" value="Unassembled WGS sequence"/>
</dbReference>
<dbReference type="GO" id="GO:0005829">
    <property type="term" value="C:cytosol"/>
    <property type="evidence" value="ECO:0007669"/>
    <property type="project" value="TreeGrafter"/>
</dbReference>
<dbReference type="GO" id="GO:0005634">
    <property type="term" value="C:nucleus"/>
    <property type="evidence" value="ECO:0007669"/>
    <property type="project" value="UniProtKB-SubCell"/>
</dbReference>
<dbReference type="GO" id="GO:0005524">
    <property type="term" value="F:ATP binding"/>
    <property type="evidence" value="ECO:0007669"/>
    <property type="project" value="UniProtKB-KW"/>
</dbReference>
<dbReference type="GO" id="GO:0016887">
    <property type="term" value="F:ATP hydrolysis activity"/>
    <property type="evidence" value="ECO:0007669"/>
    <property type="project" value="RHEA"/>
</dbReference>
<dbReference type="GO" id="GO:0003723">
    <property type="term" value="F:RNA binding"/>
    <property type="evidence" value="ECO:0007669"/>
    <property type="project" value="UniProtKB-KW"/>
</dbReference>
<dbReference type="GO" id="GO:0003724">
    <property type="term" value="F:RNA helicase activity"/>
    <property type="evidence" value="ECO:0007669"/>
    <property type="project" value="UniProtKB-EC"/>
</dbReference>
<dbReference type="GO" id="GO:0006364">
    <property type="term" value="P:rRNA processing"/>
    <property type="evidence" value="ECO:0007669"/>
    <property type="project" value="UniProtKB-KW"/>
</dbReference>
<dbReference type="CDD" id="cd17954">
    <property type="entry name" value="DEADc_DDX47"/>
    <property type="match status" value="1"/>
</dbReference>
<dbReference type="CDD" id="cd18787">
    <property type="entry name" value="SF2_C_DEAD"/>
    <property type="match status" value="1"/>
</dbReference>
<dbReference type="Gene3D" id="3.40.50.300">
    <property type="entry name" value="P-loop containing nucleotide triphosphate hydrolases"/>
    <property type="match status" value="2"/>
</dbReference>
<dbReference type="InterPro" id="IPR044765">
    <property type="entry name" value="DDX47/Rrp3_DEADc"/>
</dbReference>
<dbReference type="InterPro" id="IPR011545">
    <property type="entry name" value="DEAD/DEAH_box_helicase_dom"/>
</dbReference>
<dbReference type="InterPro" id="IPR050079">
    <property type="entry name" value="DEAD_box_RNA_helicase"/>
</dbReference>
<dbReference type="InterPro" id="IPR014001">
    <property type="entry name" value="Helicase_ATP-bd"/>
</dbReference>
<dbReference type="InterPro" id="IPR001650">
    <property type="entry name" value="Helicase_C-like"/>
</dbReference>
<dbReference type="InterPro" id="IPR027417">
    <property type="entry name" value="P-loop_NTPase"/>
</dbReference>
<dbReference type="InterPro" id="IPR000629">
    <property type="entry name" value="RNA-helicase_DEAD-box_CS"/>
</dbReference>
<dbReference type="InterPro" id="IPR014014">
    <property type="entry name" value="RNA_helicase_DEAD_Q_motif"/>
</dbReference>
<dbReference type="PANTHER" id="PTHR47959:SF24">
    <property type="entry name" value="ATP-DEPENDENT RNA HELICASE"/>
    <property type="match status" value="1"/>
</dbReference>
<dbReference type="PANTHER" id="PTHR47959">
    <property type="entry name" value="ATP-DEPENDENT RNA HELICASE RHLE-RELATED"/>
    <property type="match status" value="1"/>
</dbReference>
<dbReference type="Pfam" id="PF00270">
    <property type="entry name" value="DEAD"/>
    <property type="match status" value="1"/>
</dbReference>
<dbReference type="Pfam" id="PF00271">
    <property type="entry name" value="Helicase_C"/>
    <property type="match status" value="1"/>
</dbReference>
<dbReference type="SMART" id="SM00487">
    <property type="entry name" value="DEXDc"/>
    <property type="match status" value="1"/>
</dbReference>
<dbReference type="SMART" id="SM00490">
    <property type="entry name" value="HELICc"/>
    <property type="match status" value="1"/>
</dbReference>
<dbReference type="SUPFAM" id="SSF52540">
    <property type="entry name" value="P-loop containing nucleoside triphosphate hydrolases"/>
    <property type="match status" value="1"/>
</dbReference>
<dbReference type="PROSITE" id="PS00039">
    <property type="entry name" value="DEAD_ATP_HELICASE"/>
    <property type="match status" value="1"/>
</dbReference>
<dbReference type="PROSITE" id="PS51192">
    <property type="entry name" value="HELICASE_ATP_BIND_1"/>
    <property type="match status" value="1"/>
</dbReference>
<dbReference type="PROSITE" id="PS51194">
    <property type="entry name" value="HELICASE_CTER"/>
    <property type="match status" value="1"/>
</dbReference>
<dbReference type="PROSITE" id="PS51195">
    <property type="entry name" value="Q_MOTIF"/>
    <property type="match status" value="1"/>
</dbReference>
<proteinExistence type="inferred from homology"/>
<name>RRP3_ASPTN</name>
<accession>Q0CIQ3</accession>
<gene>
    <name evidence="1" type="primary">rrp3</name>
    <name type="ORF">ATEG_06431</name>
</gene>
<reference key="1">
    <citation type="submission" date="2005-09" db="EMBL/GenBank/DDBJ databases">
        <title>Annotation of the Aspergillus terreus NIH2624 genome.</title>
        <authorList>
            <person name="Birren B.W."/>
            <person name="Lander E.S."/>
            <person name="Galagan J.E."/>
            <person name="Nusbaum C."/>
            <person name="Devon K."/>
            <person name="Henn M."/>
            <person name="Ma L.-J."/>
            <person name="Jaffe D.B."/>
            <person name="Butler J."/>
            <person name="Alvarez P."/>
            <person name="Gnerre S."/>
            <person name="Grabherr M."/>
            <person name="Kleber M."/>
            <person name="Mauceli E.W."/>
            <person name="Brockman W."/>
            <person name="Rounsley S."/>
            <person name="Young S.K."/>
            <person name="LaButti K."/>
            <person name="Pushparaj V."/>
            <person name="DeCaprio D."/>
            <person name="Crawford M."/>
            <person name="Koehrsen M."/>
            <person name="Engels R."/>
            <person name="Montgomery P."/>
            <person name="Pearson M."/>
            <person name="Howarth C."/>
            <person name="Larson L."/>
            <person name="Luoma S."/>
            <person name="White J."/>
            <person name="Alvarado L."/>
            <person name="Kodira C.D."/>
            <person name="Zeng Q."/>
            <person name="Oleary S."/>
            <person name="Yandava C."/>
            <person name="Denning D.W."/>
            <person name="Nierman W.C."/>
            <person name="Milne T."/>
            <person name="Madden K."/>
        </authorList>
    </citation>
    <scope>NUCLEOTIDE SEQUENCE [LARGE SCALE GENOMIC DNA]</scope>
    <source>
        <strain>NIH 2624 / FGSC A1156</strain>
    </source>
</reference>
<organism>
    <name type="scientific">Aspergillus terreus (strain NIH 2624 / FGSC A1156)</name>
    <dbReference type="NCBI Taxonomy" id="341663"/>
    <lineage>
        <taxon>Eukaryota</taxon>
        <taxon>Fungi</taxon>
        <taxon>Dikarya</taxon>
        <taxon>Ascomycota</taxon>
        <taxon>Pezizomycotina</taxon>
        <taxon>Eurotiomycetes</taxon>
        <taxon>Eurotiomycetidae</taxon>
        <taxon>Eurotiales</taxon>
        <taxon>Aspergillaceae</taxon>
        <taxon>Aspergillus</taxon>
        <taxon>Aspergillus subgen. Circumdati</taxon>
    </lineage>
</organism>
<comment type="function">
    <text evidence="1">ATP-dependent rRNA helicase required for pre-ribosomal RNA processing. Involved in the maturation of the 35S-pre-rRNA and to its cleavage to mature 18S rRNA.</text>
</comment>
<comment type="catalytic activity">
    <reaction evidence="1">
        <text>ATP + H2O = ADP + phosphate + H(+)</text>
        <dbReference type="Rhea" id="RHEA:13065"/>
        <dbReference type="ChEBI" id="CHEBI:15377"/>
        <dbReference type="ChEBI" id="CHEBI:15378"/>
        <dbReference type="ChEBI" id="CHEBI:30616"/>
        <dbReference type="ChEBI" id="CHEBI:43474"/>
        <dbReference type="ChEBI" id="CHEBI:456216"/>
        <dbReference type="EC" id="3.6.4.13"/>
    </reaction>
</comment>
<comment type="subunit">
    <text evidence="1">Interacts with the SSU processome.</text>
</comment>
<comment type="subcellular location">
    <subcellularLocation>
        <location evidence="5">Nucleus</location>
    </subcellularLocation>
</comment>
<comment type="domain">
    <text evidence="5">The Q motif is unique to and characteristic of the DEAD box family of RNA helicases and controls ATP binding and hydrolysis.</text>
</comment>
<comment type="similarity">
    <text evidence="5">Belongs to the DEAD box helicase family. DDX47/RRP3 subfamily.</text>
</comment>
<comment type="sequence caution" evidence="5">
    <conflict type="erroneous initiation">
        <sequence resource="EMBL-CDS" id="EAU32975"/>
    </conflict>
</comment>